<organism>
    <name type="scientific">Homo sapiens</name>
    <name type="common">Human</name>
    <dbReference type="NCBI Taxonomy" id="9606"/>
    <lineage>
        <taxon>Eukaryota</taxon>
        <taxon>Metazoa</taxon>
        <taxon>Chordata</taxon>
        <taxon>Craniata</taxon>
        <taxon>Vertebrata</taxon>
        <taxon>Euteleostomi</taxon>
        <taxon>Mammalia</taxon>
        <taxon>Eutheria</taxon>
        <taxon>Euarchontoglires</taxon>
        <taxon>Primates</taxon>
        <taxon>Haplorrhini</taxon>
        <taxon>Catarrhini</taxon>
        <taxon>Hominidae</taxon>
        <taxon>Homo</taxon>
    </lineage>
</organism>
<reference key="1">
    <citation type="journal article" date="1995" name="J. Biol. Chem.">
        <title>Pancreatic islet cells express a family of inwardly rectifying K+ channel subunits which interact to form G-protein-activated channels.</title>
        <authorList>
            <person name="Ferrer J."/>
            <person name="Nichols C.G."/>
            <person name="Makhina E.N."/>
            <person name="Salkoff L."/>
            <person name="Bernstein J."/>
            <person name="Gerhard D."/>
            <person name="Wasson J."/>
            <person name="Ramanadham S."/>
            <person name="Permutt A."/>
        </authorList>
    </citation>
    <scope>NUCLEOTIDE SEQUENCE [MRNA]</scope>
    <scope>FUNCTION</scope>
    <scope>SUBUNIT</scope>
    <scope>TISSUE SPECIFICITY</scope>
    <source>
        <tissue>Insulinoma</tissue>
    </source>
</reference>
<reference key="2">
    <citation type="journal article" date="1997" name="Mol. Cell. Neurosci.">
        <title>Subunit interactions in the assembly of neuronal Kir3.0 inwardly rectifying K+ channels.</title>
        <authorList>
            <person name="Wischmeyer E."/>
            <person name="Doering F."/>
            <person name="Wischmeyer E."/>
            <person name="Spauschus A."/>
            <person name="Thomzig A."/>
            <person name="Veh R."/>
            <person name="Karschin A."/>
        </authorList>
    </citation>
    <scope>NUCLEOTIDE SEQUENCE [MRNA]</scope>
    <scope>SUBUNIT</scope>
    <source>
        <tissue>Cerebellum</tissue>
    </source>
</reference>
<reference key="3">
    <citation type="submission" date="1997-01" db="EMBL/GenBank/DDBJ databases">
        <title>Gene identification in the 1.6 Mb of the Down syndrome region on chromosome 21.</title>
        <authorList>
            <person name="Ohira M."/>
            <person name="Seki N."/>
            <person name="Nagase T."/>
            <person name="Suzuki E."/>
            <person name="Nomura N."/>
            <person name="Ohara O."/>
            <person name="Saito T."/>
            <person name="Ichikawa H."/>
            <person name="Ohki M."/>
        </authorList>
    </citation>
    <scope>NUCLEOTIDE SEQUENCE [MRNA]</scope>
    <source>
        <tissue>Brain</tissue>
    </source>
</reference>
<reference key="4">
    <citation type="journal article" date="1999" name="Cell. Signal.">
        <title>Co-expression of human Kir3 subunits can yield channels with different functional properties.</title>
        <authorList>
            <person name="Schoots O."/>
            <person name="Wilson J.M."/>
            <person name="Ethier N."/>
            <person name="Bigras E."/>
            <person name="Hebert T.E."/>
            <person name="Van Tol H.H.M."/>
        </authorList>
    </citation>
    <scope>NUCLEOTIDE SEQUENCE [MRNA]</scope>
    <scope>FUNCTION</scope>
    <scope>TRANSPORTER ACTIVITY</scope>
    <scope>SUBUNIT</scope>
    <source>
        <tissue>Cerebellum</tissue>
    </source>
</reference>
<reference key="5">
    <citation type="journal article" date="2004" name="Genome Res.">
        <title>The status, quality, and expansion of the NIH full-length cDNA project: the Mammalian Gene Collection (MGC).</title>
        <authorList>
            <consortium name="The MGC Project Team"/>
        </authorList>
    </citation>
    <scope>NUCLEOTIDE SEQUENCE [LARGE SCALE MRNA]</scope>
    <source>
        <tissue>Placenta</tissue>
    </source>
</reference>
<reference key="6">
    <citation type="journal article" date="1995" name="FEBS Lett.">
        <title>Characterization and variation of a human inwardly-rectifying-K-channel gene (KCNJ6): a putative ATP-sensitive K-channel subunit.</title>
        <authorList>
            <person name="Sakura H."/>
            <person name="Bond C."/>
            <person name="Warren-Perry M."/>
            <person name="Horsley S."/>
            <person name="Kearney L."/>
            <person name="Tucker S."/>
            <person name="Adelman J."/>
            <person name="Turner R."/>
            <person name="Ashcroft F.M."/>
        </authorList>
    </citation>
    <scope>NUCLEOTIDE SEQUENCE [GENOMIC DNA] OF 17-423</scope>
</reference>
<reference key="7">
    <citation type="journal article" date="1995" name="Diabetes">
        <title>Isolation of a cDNA clone encoding a KATP channel-like protein expressed in insulin-secreting cells, localization of the human gene to chromosome band 21q22.1, and linkage studies with NIDDM.</title>
        <authorList>
            <person name="Tsaur M.-L."/>
            <person name="Menzel S."/>
            <person name="Lai F.-P."/>
            <person name="Espinosa R. III"/>
            <person name="Concannon P."/>
            <person name="Spielman R.S."/>
            <person name="Hanis C.L."/>
            <person name="Cox N.J."/>
            <person name="le Beau M.M."/>
            <person name="German M.S."/>
            <person name="Jan L.Y."/>
            <person name="Bell G.I."/>
            <person name="Stoffel M."/>
        </authorList>
    </citation>
    <scope>NUCLEOTIDE SEQUENCE [GENOMIC DNA] OF 116-211</scope>
</reference>
<reference key="8">
    <citation type="journal article" date="2015" name="Am. J. Hum. Genet.">
        <title>Keppen-Lubinsky syndrome is caused by mutations in the inwardly rectifying K+ channel encoded by KCNJ6.</title>
        <authorList>
            <person name="Masotti A."/>
            <person name="Uva P."/>
            <person name="Davis-Keppen L."/>
            <person name="Basel-Vanagaite L."/>
            <person name="Cohen L."/>
            <person name="Pisaneschi E."/>
            <person name="Celluzzi A."/>
            <person name="Bencivenga P."/>
            <person name="Fang M."/>
            <person name="Tian M."/>
            <person name="Xu X."/>
            <person name="Cappa M."/>
            <person name="Dallapiccola B."/>
        </authorList>
    </citation>
    <scope>INVOLVEMENT IN KPLBS</scope>
    <scope>VARIANTS KPLBS THR-152 DEL AND SER-154</scope>
</reference>
<dbReference type="EMBL" id="U24660">
    <property type="protein sequence ID" value="AAC50258.1"/>
    <property type="molecule type" value="mRNA"/>
</dbReference>
<dbReference type="EMBL" id="L78480">
    <property type="protein sequence ID" value="AAB02277.1"/>
    <property type="molecule type" value="mRNA"/>
</dbReference>
<dbReference type="EMBL" id="D87327">
    <property type="protein sequence ID" value="BAA13331.1"/>
    <property type="molecule type" value="mRNA"/>
</dbReference>
<dbReference type="EMBL" id="U52153">
    <property type="protein sequence ID" value="AAB07044.1"/>
    <property type="molecule type" value="mRNA"/>
</dbReference>
<dbReference type="EMBL" id="BC101547">
    <property type="protein sequence ID" value="AAI01548.1"/>
    <property type="molecule type" value="mRNA"/>
</dbReference>
<dbReference type="EMBL" id="S78685">
    <property type="protein sequence ID" value="AAB34738.2"/>
    <property type="molecule type" value="Genomic_DNA"/>
</dbReference>
<dbReference type="EMBL" id="S78684">
    <property type="protein sequence ID" value="AAB34738.2"/>
    <property type="status" value="JOINED"/>
    <property type="molecule type" value="Genomic_DNA"/>
</dbReference>
<dbReference type="EMBL" id="G02354">
    <property type="status" value="NOT_ANNOTATED_CDS"/>
    <property type="molecule type" value="Genomic_DNA"/>
</dbReference>
<dbReference type="CCDS" id="CCDS42927.1"/>
<dbReference type="PIR" id="I38979">
    <property type="entry name" value="I38979"/>
</dbReference>
<dbReference type="RefSeq" id="NP_002231.1">
    <property type="nucleotide sequence ID" value="NM_002240.5"/>
</dbReference>
<dbReference type="SMR" id="P48051"/>
<dbReference type="BioGRID" id="109965">
    <property type="interactions" value="81"/>
</dbReference>
<dbReference type="FunCoup" id="P48051">
    <property type="interactions" value="810"/>
</dbReference>
<dbReference type="IntAct" id="P48051">
    <property type="interactions" value="72"/>
</dbReference>
<dbReference type="MINT" id="P48051"/>
<dbReference type="STRING" id="9606.ENSP00000477437"/>
<dbReference type="BindingDB" id="P48051"/>
<dbReference type="ChEMBL" id="CHEMBL2406895"/>
<dbReference type="DrugBank" id="DB00898">
    <property type="generic name" value="Ethanol"/>
</dbReference>
<dbReference type="DrugBank" id="DB01159">
    <property type="generic name" value="Halothane"/>
</dbReference>
<dbReference type="DrugBank" id="DB08954">
    <property type="generic name" value="Ifenprodil"/>
</dbReference>
<dbReference type="DrugBank" id="DB11633">
    <property type="generic name" value="Isavuconazole"/>
</dbReference>
<dbReference type="DrugCentral" id="P48051"/>
<dbReference type="GuidetoPHARMACOLOGY" id="435"/>
<dbReference type="TCDB" id="1.A.2.1.10">
    <property type="family name" value="the inward rectifier k(+) channel (irk-c) family"/>
</dbReference>
<dbReference type="iPTMnet" id="P48051"/>
<dbReference type="PhosphoSitePlus" id="P48051"/>
<dbReference type="BioMuta" id="KCNJ6"/>
<dbReference type="DMDM" id="1352487"/>
<dbReference type="MassIVE" id="P48051"/>
<dbReference type="PaxDb" id="9606-ENSP00000477437"/>
<dbReference type="PeptideAtlas" id="P48051"/>
<dbReference type="ProteomicsDB" id="55842"/>
<dbReference type="Antibodypedia" id="23226">
    <property type="antibodies" value="302 antibodies from 34 providers"/>
</dbReference>
<dbReference type="DNASU" id="3763"/>
<dbReference type="Ensembl" id="ENST00000609713.2">
    <property type="protein sequence ID" value="ENSP00000477437.1"/>
    <property type="gene ID" value="ENSG00000157542.11"/>
</dbReference>
<dbReference type="Ensembl" id="ENST00000645093.1">
    <property type="protein sequence ID" value="ENSP00000493772.1"/>
    <property type="gene ID" value="ENSG00000157542.11"/>
</dbReference>
<dbReference type="GeneID" id="3763"/>
<dbReference type="KEGG" id="hsa:3763"/>
<dbReference type="MANE-Select" id="ENST00000609713.2">
    <property type="protein sequence ID" value="ENSP00000477437.1"/>
    <property type="RefSeq nucleotide sequence ID" value="NM_002240.5"/>
    <property type="RefSeq protein sequence ID" value="NP_002231.1"/>
</dbReference>
<dbReference type="UCSC" id="uc002ywn.2">
    <property type="organism name" value="human"/>
</dbReference>
<dbReference type="AGR" id="HGNC:6267"/>
<dbReference type="CTD" id="3763"/>
<dbReference type="DisGeNET" id="3763"/>
<dbReference type="GeneCards" id="KCNJ6"/>
<dbReference type="HGNC" id="HGNC:6267">
    <property type="gene designation" value="KCNJ6"/>
</dbReference>
<dbReference type="HPA" id="ENSG00000157542">
    <property type="expression patterns" value="Tissue enhanced (brain, pituitary gland)"/>
</dbReference>
<dbReference type="MalaCards" id="KCNJ6"/>
<dbReference type="MIM" id="600877">
    <property type="type" value="gene"/>
</dbReference>
<dbReference type="MIM" id="614098">
    <property type="type" value="phenotype"/>
</dbReference>
<dbReference type="neXtProt" id="NX_P48051"/>
<dbReference type="OpenTargets" id="ENSG00000157542"/>
<dbReference type="Orphanet" id="435628">
    <property type="disease" value="Keppen-Lubinsky syndrome"/>
</dbReference>
<dbReference type="PharmGKB" id="PA30049"/>
<dbReference type="VEuPathDB" id="HostDB:ENSG00000157542"/>
<dbReference type="eggNOG" id="KOG3827">
    <property type="taxonomic scope" value="Eukaryota"/>
</dbReference>
<dbReference type="GeneTree" id="ENSGT01080000257365"/>
<dbReference type="HOGENOM" id="CLU_022738_11_0_1"/>
<dbReference type="InParanoid" id="P48051"/>
<dbReference type="OMA" id="ETNTPPY"/>
<dbReference type="OrthoDB" id="273257at2759"/>
<dbReference type="PAN-GO" id="P48051">
    <property type="GO annotations" value="4 GO annotations based on evolutionary models"/>
</dbReference>
<dbReference type="PhylomeDB" id="P48051"/>
<dbReference type="TreeFam" id="TF313676"/>
<dbReference type="PathwayCommons" id="P48051"/>
<dbReference type="Reactome" id="R-HSA-1296041">
    <property type="pathway name" value="Activation of G protein gated Potassium channels"/>
</dbReference>
<dbReference type="Reactome" id="R-HSA-997272">
    <property type="pathway name" value="Inhibition of voltage gated Ca2+ channels via Gbeta/gamma subunits"/>
</dbReference>
<dbReference type="SignaLink" id="P48051"/>
<dbReference type="BioGRID-ORCS" id="3763">
    <property type="hits" value="13 hits in 1074 CRISPR screens"/>
</dbReference>
<dbReference type="ChiTaRS" id="KCNJ6">
    <property type="organism name" value="human"/>
</dbReference>
<dbReference type="GeneWiki" id="KCNJ6"/>
<dbReference type="GenomeRNAi" id="3763"/>
<dbReference type="Pharos" id="P48051">
    <property type="development level" value="Tchem"/>
</dbReference>
<dbReference type="PRO" id="PR:P48051"/>
<dbReference type="Proteomes" id="UP000005640">
    <property type="component" value="Chromosome 21"/>
</dbReference>
<dbReference type="RNAct" id="P48051">
    <property type="molecule type" value="protein"/>
</dbReference>
<dbReference type="Bgee" id="ENSG00000157542">
    <property type="expression patterns" value="Expressed in substantia nigra pars reticulata and 79 other cell types or tissues"/>
</dbReference>
<dbReference type="GO" id="GO:0005794">
    <property type="term" value="C:Golgi apparatus"/>
    <property type="evidence" value="ECO:0007005"/>
    <property type="project" value="UniProtKB"/>
</dbReference>
<dbReference type="GO" id="GO:0005886">
    <property type="term" value="C:plasma membrane"/>
    <property type="evidence" value="ECO:0007005"/>
    <property type="project" value="UniProtKB"/>
</dbReference>
<dbReference type="GO" id="GO:0008076">
    <property type="term" value="C:voltage-gated potassium channel complex"/>
    <property type="evidence" value="ECO:0000304"/>
    <property type="project" value="ProtInc"/>
</dbReference>
<dbReference type="GO" id="GO:0015467">
    <property type="term" value="F:G-protein activated inward rectifier potassium channel activity"/>
    <property type="evidence" value="ECO:0000304"/>
    <property type="project" value="ProtInc"/>
</dbReference>
<dbReference type="GO" id="GO:0005242">
    <property type="term" value="F:inward rectifier potassium channel activity"/>
    <property type="evidence" value="ECO:0000314"/>
    <property type="project" value="UniProtKB"/>
</dbReference>
<dbReference type="GO" id="GO:1990573">
    <property type="term" value="P:potassium ion import across plasma membrane"/>
    <property type="evidence" value="ECO:0000318"/>
    <property type="project" value="GO_Central"/>
</dbReference>
<dbReference type="GO" id="GO:0006813">
    <property type="term" value="P:potassium ion transport"/>
    <property type="evidence" value="ECO:0000304"/>
    <property type="project" value="ProtInc"/>
</dbReference>
<dbReference type="GO" id="GO:0034765">
    <property type="term" value="P:regulation of monoatomic ion transmembrane transport"/>
    <property type="evidence" value="ECO:0000318"/>
    <property type="project" value="GO_Central"/>
</dbReference>
<dbReference type="FunFam" id="1.10.287.70:FF:000019">
    <property type="entry name" value="G protein-activated inward rectifier potassium channel 1"/>
    <property type="match status" value="1"/>
</dbReference>
<dbReference type="FunFam" id="2.60.40.1400:FF:000005">
    <property type="entry name" value="G protein-activated inward rectifier potassium channel 2"/>
    <property type="match status" value="1"/>
</dbReference>
<dbReference type="Gene3D" id="1.10.287.70">
    <property type="match status" value="1"/>
</dbReference>
<dbReference type="Gene3D" id="2.60.40.1400">
    <property type="entry name" value="G protein-activated inward rectifier potassium channel 1"/>
    <property type="match status" value="1"/>
</dbReference>
<dbReference type="InterPro" id="IPR014756">
    <property type="entry name" value="Ig_E-set"/>
</dbReference>
<dbReference type="InterPro" id="IPR041647">
    <property type="entry name" value="IRK_C"/>
</dbReference>
<dbReference type="InterPro" id="IPR016449">
    <property type="entry name" value="K_chnl_inward-rec_Kir"/>
</dbReference>
<dbReference type="InterPro" id="IPR003275">
    <property type="entry name" value="K_chnl_inward-rec_Kir3.2"/>
</dbReference>
<dbReference type="InterPro" id="IPR013518">
    <property type="entry name" value="K_chnl_inward-rec_Kir_cyto"/>
</dbReference>
<dbReference type="InterPro" id="IPR040445">
    <property type="entry name" value="Kir_TM"/>
</dbReference>
<dbReference type="PANTHER" id="PTHR11767:SF19">
    <property type="entry name" value="G PROTEIN-ACTIVATED INWARD RECTIFIER POTASSIUM CHANNEL 2"/>
    <property type="match status" value="1"/>
</dbReference>
<dbReference type="PANTHER" id="PTHR11767">
    <property type="entry name" value="INWARD RECTIFIER POTASSIUM CHANNEL"/>
    <property type="match status" value="1"/>
</dbReference>
<dbReference type="Pfam" id="PF01007">
    <property type="entry name" value="IRK"/>
    <property type="match status" value="1"/>
</dbReference>
<dbReference type="Pfam" id="PF17655">
    <property type="entry name" value="IRK_C"/>
    <property type="match status" value="1"/>
</dbReference>
<dbReference type="PIRSF" id="PIRSF005465">
    <property type="entry name" value="GIRK_kir"/>
    <property type="match status" value="1"/>
</dbReference>
<dbReference type="PRINTS" id="PR01328">
    <property type="entry name" value="KIR32CHANNEL"/>
</dbReference>
<dbReference type="PRINTS" id="PR01320">
    <property type="entry name" value="KIRCHANNEL"/>
</dbReference>
<dbReference type="SUPFAM" id="SSF81296">
    <property type="entry name" value="E set domains"/>
    <property type="match status" value="1"/>
</dbReference>
<dbReference type="SUPFAM" id="SSF81324">
    <property type="entry name" value="Voltage-gated potassium channels"/>
    <property type="match status" value="1"/>
</dbReference>
<evidence type="ECO:0000250" key="1"/>
<evidence type="ECO:0000250" key="2">
    <source>
        <dbReference type="UniProtKB" id="P48542"/>
    </source>
</evidence>
<evidence type="ECO:0000250" key="3">
    <source>
        <dbReference type="UniProtKB" id="P48550"/>
    </source>
</evidence>
<evidence type="ECO:0000255" key="4"/>
<evidence type="ECO:0000256" key="5">
    <source>
        <dbReference type="SAM" id="MobiDB-lite"/>
    </source>
</evidence>
<evidence type="ECO:0000269" key="6">
    <source>
    </source>
</evidence>
<evidence type="ECO:0000269" key="7">
    <source>
    </source>
</evidence>
<evidence type="ECO:0000269" key="8">
    <source>
    </source>
</evidence>
<evidence type="ECO:0000269" key="9">
    <source>
    </source>
</evidence>
<evidence type="ECO:0000305" key="10"/>
<keyword id="KW-1022">Congenital generalized lipodystrophy</keyword>
<keyword id="KW-0225">Disease variant</keyword>
<keyword id="KW-0991">Intellectual disability</keyword>
<keyword id="KW-0407">Ion channel</keyword>
<keyword id="KW-0406">Ion transport</keyword>
<keyword id="KW-0472">Membrane</keyword>
<keyword id="KW-0597">Phosphoprotein</keyword>
<keyword id="KW-0630">Potassium</keyword>
<keyword id="KW-0633">Potassium transport</keyword>
<keyword id="KW-1267">Proteomics identification</keyword>
<keyword id="KW-1185">Reference proteome</keyword>
<keyword id="KW-0812">Transmembrane</keyword>
<keyword id="KW-1133">Transmembrane helix</keyword>
<keyword id="KW-0813">Transport</keyword>
<keyword id="KW-0851">Voltage-gated channel</keyword>
<feature type="chain" id="PRO_0000154942" description="G protein-activated inward rectifier potassium channel 2">
    <location>
        <begin position="1"/>
        <end position="423"/>
    </location>
</feature>
<feature type="topological domain" description="Cytoplasmic" evidence="1">
    <location>
        <begin position="1"/>
        <end position="89"/>
    </location>
</feature>
<feature type="transmembrane region" description="Helical; Name=M1" evidence="1">
    <location>
        <begin position="90"/>
        <end position="114"/>
    </location>
</feature>
<feature type="topological domain" description="Extracellular" evidence="1">
    <location>
        <begin position="115"/>
        <end position="138"/>
    </location>
</feature>
<feature type="intramembrane region" description="Helical; Pore-forming; Name=H5" evidence="1">
    <location>
        <begin position="139"/>
        <end position="150"/>
    </location>
</feature>
<feature type="intramembrane region" description="Pore-forming" evidence="1">
    <location>
        <begin position="151"/>
        <end position="157"/>
    </location>
</feature>
<feature type="topological domain" description="Extracellular" evidence="1">
    <location>
        <begin position="158"/>
        <end position="166"/>
    </location>
</feature>
<feature type="transmembrane region" description="Helical; Name=M2" evidence="1">
    <location>
        <begin position="167"/>
        <end position="188"/>
    </location>
</feature>
<feature type="topological domain" description="Cytoplasmic" evidence="1">
    <location>
        <begin position="189"/>
        <end position="423"/>
    </location>
</feature>
<feature type="region of interest" description="Disordered" evidence="5">
    <location>
        <begin position="390"/>
        <end position="423"/>
    </location>
</feature>
<feature type="short sequence motif" description="Selectivity filter" evidence="1">
    <location>
        <begin position="152"/>
        <end position="157"/>
    </location>
</feature>
<feature type="short sequence motif" description="PDZ-binding">
    <location>
        <begin position="420"/>
        <end position="423"/>
    </location>
</feature>
<feature type="site" description="Role in the control of polyamine-mediated channel gating and in the blocking by intracellular magnesium" evidence="1">
    <location>
        <position position="182"/>
    </location>
</feature>
<feature type="modified residue" description="Phosphoserine" evidence="2">
    <location>
        <position position="16"/>
    </location>
</feature>
<feature type="modified residue" description="Phosphoserine" evidence="2">
    <location>
        <position position="23"/>
    </location>
</feature>
<feature type="sequence variant" id="VAR_073430" description="In KPLBS." evidence="7">
    <location>
        <position position="152"/>
    </location>
</feature>
<feature type="sequence variant" id="VAR_073431" description="In KPLBS; dbSNP:rs786204795." evidence="7">
    <original>G</original>
    <variation>S</variation>
    <location>
        <position position="154"/>
    </location>
</feature>
<name>KCNJ6_HUMAN</name>
<protein>
    <recommendedName>
        <fullName>G protein-activated inward rectifier potassium channel 2</fullName>
        <shortName>GIRK-2</shortName>
    </recommendedName>
    <alternativeName>
        <fullName>BIR1</fullName>
    </alternativeName>
    <alternativeName>
        <fullName>Inward rectifier K(+) channel Kir3.2</fullName>
    </alternativeName>
    <alternativeName>
        <fullName>KATP-2</fullName>
    </alternativeName>
    <alternativeName>
        <fullName>Potassium channel, inwardly rectifying subfamily J member 6</fullName>
    </alternativeName>
</protein>
<accession>P48051</accession>
<accession>Q3MJ74</accession>
<accession>Q53WW6</accession>
<proteinExistence type="evidence at protein level"/>
<gene>
    <name type="primary">KCNJ6</name>
    <name type="synonym">GIRK2</name>
    <name type="synonym">KATP2</name>
    <name type="synonym">KCNJ7</name>
</gene>
<sequence length="423" mass="48451">MAKLTESMTNVLEGDSMDQDVESPVAIHQPKLPKQARDDLPRHISRDRTKRKIQRYVRKDGKCNVHHGNVRETYRYLTDIFTTLVDLKWRFNLLIFVMVYTVTWLFFGMIWWLIAYIRGDMDHIEDPSWTPCVTNLNGFVSAFLFSIETETTIGYGYRVITDKCPEGIILLLIQSVLGSIVNAFMVGCMFVKISQPKKRAETLVFSTHAVISMRDGKLCLMFRVGDLRNSHIVEASIRAKLIKSKQTSEGEFIPLNQTDINVGYYTGDDRLFLVSPLIISHEINQQSPFWEISKAQLPKEELEIVVILEGMVEATGMTCQARSSYITSEILWGYRFTPVLTLEDGFYEVDYNSFHETYETSTPSLSAKELAELASRAELPLSWSVSSKLNQHAELETEEEEKNLEEQTERNGDVANLENESKV</sequence>
<comment type="function">
    <text evidence="6 8">Inward rectifier potassium channels are characterized by a greater tendency to allow potassium to flow into the cell rather than out of it. Their voltage dependence is regulated by the concentration of extracellular potassium; as external potassium is raised, the voltage range of the channel opening shifts to more positive voltages. The inward rectification is mainly due to the blockage of outward current by internal magnesium. This potassium channel may be involved in the regulation of insulin secretion by glucose and/or neurotransmitters acting through G-protein-coupled receptors.</text>
</comment>
<comment type="catalytic activity">
    <reaction evidence="6">
        <text>K(+)(in) = K(+)(out)</text>
        <dbReference type="Rhea" id="RHEA:29463"/>
        <dbReference type="ChEBI" id="CHEBI:29103"/>
    </reaction>
</comment>
<comment type="activity regulation">
    <text evidence="3">Activated by phosphatidylinositol 4,5 biphosphate (PtdIns(4,5)P2).</text>
</comment>
<comment type="subunit">
    <text evidence="3 6 8 9">Associates with KCNJ3/GIRK1 or KCNJ5/GRIK4 to form a G-protein-activated heteromultimer pore-forming unit. The resulting inward current is much larger (PubMed:7592809, PubMed:9245502, PubMed:10659995). Interacts (via PDZ-binding motif) with SNX27 (via PDZ domain); the interaction is required when endocytosed to prevent degradation in lysosomes and promote recycling to the plasma membrane (By similarity).</text>
</comment>
<comment type="interaction">
    <interactant intactId="EBI-12017638">
        <id>P48051</id>
    </interactant>
    <interactant intactId="EBI-11957045">
        <id>Q9NVV5-2</id>
        <label>AIG1</label>
    </interactant>
    <organismsDiffer>false</organismsDiffer>
    <experiments>3</experiments>
</comment>
<comment type="interaction">
    <interactant intactId="EBI-12017638">
        <id>P48051</id>
    </interactant>
    <interactant intactId="EBI-715495">
        <id>P05090</id>
        <label>APOD</label>
    </interactant>
    <organismsDiffer>false</organismsDiffer>
    <experiments>3</experiments>
</comment>
<comment type="interaction">
    <interactant intactId="EBI-12017638">
        <id>P48051</id>
    </interactant>
    <interactant intactId="EBI-707714">
        <id>Q92843</id>
        <label>BCL2L2</label>
    </interactant>
    <organismsDiffer>false</organismsDiffer>
    <experiments>3</experiments>
</comment>
<comment type="interaction">
    <interactant intactId="EBI-12017638">
        <id>P48051</id>
    </interactant>
    <interactant intactId="EBI-749204">
        <id>O15155</id>
        <label>BET1</label>
    </interactant>
    <organismsDiffer>false</organismsDiffer>
    <experiments>3</experiments>
</comment>
<comment type="interaction">
    <interactant intactId="EBI-12017638">
        <id>P48051</id>
    </interactant>
    <interactant intactId="EBI-11522780">
        <id>Q96DZ9-2</id>
        <label>CMTM5</label>
    </interactant>
    <organismsDiffer>false</organismsDiffer>
    <experiments>3</experiments>
</comment>
<comment type="interaction">
    <interactant intactId="EBI-12017638">
        <id>P48051</id>
    </interactant>
    <interactant intactId="EBI-2835965">
        <id>Q9BT09</id>
        <label>CNPY3</label>
    </interactant>
    <organismsDiffer>false</organismsDiffer>
    <experiments>3</experiments>
</comment>
<comment type="interaction">
    <interactant intactId="EBI-12017638">
        <id>P48051</id>
    </interactant>
    <interactant intactId="EBI-12211159">
        <id>P29400-2</id>
        <label>COL4A5</label>
    </interactant>
    <organismsDiffer>false</organismsDiffer>
    <experiments>3</experiments>
</comment>
<comment type="interaction">
    <interactant intactId="EBI-12017638">
        <id>P48051</id>
    </interactant>
    <interactant intactId="EBI-10215665">
        <id>P56851</id>
        <label>EDDM3B</label>
    </interactant>
    <organismsDiffer>false</organismsDiffer>
    <experiments>3</experiments>
</comment>
<comment type="interaction">
    <interactant intactId="EBI-12017638">
        <id>P48051</id>
    </interactant>
    <interactant intactId="EBI-711490">
        <id>Q9UKR5</id>
        <label>ERG28</label>
    </interactant>
    <organismsDiffer>false</organismsDiffer>
    <experiments>3</experiments>
</comment>
<comment type="interaction">
    <interactant intactId="EBI-12017638">
        <id>P48051</id>
    </interactant>
    <interactant intactId="EBI-11090967">
        <id>O75063</id>
        <label>FAM20B</label>
    </interactant>
    <organismsDiffer>false</organismsDiffer>
    <experiments>3</experiments>
</comment>
<comment type="interaction">
    <interactant intactId="EBI-12017638">
        <id>P48051</id>
    </interactant>
    <interactant intactId="EBI-3385283">
        <id>Q9Y3D6</id>
        <label>FIS1</label>
    </interactant>
    <organismsDiffer>false</organismsDiffer>
    <experiments>3</experiments>
</comment>
<comment type="interaction">
    <interactant intactId="EBI-12017638">
        <id>P48051</id>
    </interactant>
    <interactant intactId="EBI-714482">
        <id>Q9BWH2</id>
        <label>FUNDC2</label>
    </interactant>
    <organismsDiffer>false</organismsDiffer>
    <experiments>3</experiments>
</comment>
<comment type="interaction">
    <interactant intactId="EBI-12017638">
        <id>P48051</id>
    </interactant>
    <interactant intactId="EBI-713304">
        <id>Q9H0Q3</id>
        <label>FXYD6</label>
    </interactant>
    <organismsDiffer>false</organismsDiffer>
    <experiments>3</experiments>
</comment>
<comment type="interaction">
    <interactant intactId="EBI-12017638">
        <id>P48051</id>
    </interactant>
    <interactant intactId="EBI-712096">
        <id>P30519</id>
        <label>HMOX2</label>
    </interactant>
    <organismsDiffer>false</organismsDiffer>
    <experiments>3</experiments>
</comment>
<comment type="interaction">
    <interactant intactId="EBI-12017638">
        <id>P48051</id>
    </interactant>
    <interactant intactId="EBI-11721771">
        <id>O60725</id>
        <label>ICMT</label>
    </interactant>
    <organismsDiffer>false</organismsDiffer>
    <experiments>3</experiments>
</comment>
<comment type="interaction">
    <interactant intactId="EBI-12017638">
        <id>P48051</id>
    </interactant>
    <interactant intactId="EBI-2568251">
        <id>P11215</id>
        <label>ITGAM</label>
    </interactant>
    <organismsDiffer>false</organismsDiffer>
    <experiments>3</experiments>
</comment>
<comment type="interaction">
    <interactant intactId="EBI-12017638">
        <id>P48051</id>
    </interactant>
    <interactant intactId="EBI-750776">
        <id>O95214</id>
        <label>LEPROTL1</label>
    </interactant>
    <organismsDiffer>false</organismsDiffer>
    <experiments>3</experiments>
</comment>
<comment type="interaction">
    <interactant intactId="EBI-12017638">
        <id>P48051</id>
    </interactant>
    <interactant intactId="EBI-12033434">
        <id>Q9UBY5</id>
        <label>LPAR3</label>
    </interactant>
    <organismsDiffer>false</organismsDiffer>
    <experiments>3</experiments>
</comment>
<comment type="interaction">
    <interactant intactId="EBI-12017638">
        <id>P48051</id>
    </interactant>
    <interactant intactId="EBI-4280011">
        <id>Q7L5N7</id>
        <label>LPCAT2</label>
    </interactant>
    <organismsDiffer>false</organismsDiffer>
    <experiments>3</experiments>
</comment>
<comment type="interaction">
    <interactant intactId="EBI-12017638">
        <id>P48051</id>
    </interactant>
    <interactant intactId="EBI-8449636">
        <id>P30301</id>
        <label>MIP</label>
    </interactant>
    <organismsDiffer>false</organismsDiffer>
    <experiments>3</experiments>
</comment>
<comment type="interaction">
    <interactant intactId="EBI-12017638">
        <id>P48051</id>
    </interactant>
    <interactant intactId="EBI-7950783">
        <id>Q96JP2</id>
        <label>MYO15B</label>
    </interactant>
    <organismsDiffer>false</organismsDiffer>
    <experiments>3</experiments>
</comment>
<comment type="interaction">
    <interactant intactId="EBI-12017638">
        <id>P48051</id>
    </interactant>
    <interactant intactId="EBI-10317425">
        <id>Q9NZG7</id>
        <label>NINJ2</label>
    </interactant>
    <organismsDiffer>false</organismsDiffer>
    <experiments>3</experiments>
</comment>
<comment type="interaction">
    <interactant intactId="EBI-12017638">
        <id>P48051</id>
    </interactant>
    <interactant intactId="EBI-12051377">
        <id>Q8N912</id>
        <label>NRAC</label>
    </interactant>
    <organismsDiffer>false</organismsDiffer>
    <experiments>3</experiments>
</comment>
<comment type="interaction">
    <interactant intactId="EBI-12017638">
        <id>P48051</id>
    </interactant>
    <interactant intactId="EBI-11075081">
        <id>Q53FV1</id>
        <label>ORMDL2</label>
    </interactant>
    <organismsDiffer>false</organismsDiffer>
    <experiments>3</experiments>
</comment>
<comment type="interaction">
    <interactant intactId="EBI-12017638">
        <id>P48051</id>
    </interactant>
    <interactant intactId="EBI-17284886">
        <id>Q96HA9</id>
        <label>PEX11G</label>
    </interactant>
    <organismsDiffer>false</organismsDiffer>
    <experiments>3</experiments>
</comment>
<comment type="interaction">
    <interactant intactId="EBI-12017638">
        <id>P48051</id>
    </interactant>
    <interactant intactId="EBI-981985">
        <id>Q9Y5Y5</id>
        <label>PEX16</label>
    </interactant>
    <organismsDiffer>false</organismsDiffer>
    <experiments>3</experiments>
</comment>
<comment type="interaction">
    <interactant intactId="EBI-12017638">
        <id>P48051</id>
    </interactant>
    <interactant intactId="EBI-3919291">
        <id>Q9Y342</id>
        <label>PLLP</label>
    </interactant>
    <organismsDiffer>false</organismsDiffer>
    <experiments>3</experiments>
</comment>
<comment type="interaction">
    <interactant intactId="EBI-12017638">
        <id>P48051</id>
    </interactant>
    <interactant intactId="EBI-2845982">
        <id>Q01453</id>
        <label>PMP22</label>
    </interactant>
    <organismsDiffer>false</organismsDiffer>
    <experiments>3</experiments>
</comment>
<comment type="interaction">
    <interactant intactId="EBI-12017638">
        <id>P48051</id>
    </interactant>
    <interactant intactId="EBI-8652812">
        <id>P54315</id>
        <label>PNLIPRP1</label>
    </interactant>
    <organismsDiffer>false</organismsDiffer>
    <experiments>3</experiments>
</comment>
<comment type="interaction">
    <interactant intactId="EBI-12017638">
        <id>P48051</id>
    </interactant>
    <interactant intactId="EBI-1052363">
        <id>Q9NS64</id>
        <label>RPRM</label>
    </interactant>
    <organismsDiffer>false</organismsDiffer>
    <experiments>3</experiments>
</comment>
<comment type="interaction">
    <interactant intactId="EBI-12017638">
        <id>P48051</id>
    </interactant>
    <interactant intactId="EBI-10244780">
        <id>Q5QGT7</id>
        <label>RTP2</label>
    </interactant>
    <organismsDiffer>false</organismsDiffer>
    <experiments>3</experiments>
</comment>
<comment type="interaction">
    <interactant intactId="EBI-12017638">
        <id>P48051</id>
    </interactant>
    <interactant intactId="EBI-4403649">
        <id>Q969E2</id>
        <label>SCAMP4</label>
    </interactant>
    <organismsDiffer>false</organismsDiffer>
    <experiments>3</experiments>
</comment>
<comment type="interaction">
    <interactant intactId="EBI-12017638">
        <id>P48051</id>
    </interactant>
    <interactant intactId="EBI-12056025">
        <id>Q14162</id>
        <label>SCARF1</label>
    </interactant>
    <organismsDiffer>false</organismsDiffer>
    <experiments>3</experiments>
</comment>
<comment type="interaction">
    <interactant intactId="EBI-12017638">
        <id>P48051</id>
    </interactant>
    <interactant intactId="EBI-2684237">
        <id>O00767</id>
        <label>SCD</label>
    </interactant>
    <organismsDiffer>false</organismsDiffer>
    <experiments>3</experiments>
</comment>
<comment type="interaction">
    <interactant intactId="EBI-12017638">
        <id>P48051</id>
    </interactant>
    <interactant intactId="EBI-17284533">
        <id>A2A2V5</id>
        <label>SERTM1</label>
    </interactant>
    <organismsDiffer>false</organismsDiffer>
    <experiments>3</experiments>
</comment>
<comment type="interaction">
    <interactant intactId="EBI-12017638">
        <id>P48051</id>
    </interactant>
    <interactant intactId="EBI-738687">
        <id>P02808</id>
        <label>STATH</label>
    </interactant>
    <organismsDiffer>false</organismsDiffer>
    <experiments>3</experiments>
</comment>
<comment type="interaction">
    <interactant intactId="EBI-12017638">
        <id>P48051</id>
    </interactant>
    <interactant intactId="EBI-12200293">
        <id>P0DN84</id>
        <label>STRIT1</label>
    </interactant>
    <organismsDiffer>false</organismsDiffer>
    <experiments>3</experiments>
</comment>
<comment type="interaction">
    <interactant intactId="EBI-12017638">
        <id>P48051</id>
    </interactant>
    <interactant intactId="EBI-17284568">
        <id>Q9BQG1</id>
        <label>SYT3</label>
    </interactant>
    <organismsDiffer>false</organismsDiffer>
    <experiments>3</experiments>
</comment>
<comment type="interaction">
    <interactant intactId="EBI-12017638">
        <id>P48051</id>
    </interactant>
    <interactant intactId="EBI-311394">
        <id>Q9C0I4</id>
        <label>THSD7B</label>
    </interactant>
    <organismsDiffer>false</organismsDiffer>
    <experiments>3</experiments>
</comment>
<comment type="interaction">
    <interactant intactId="EBI-12017638">
        <id>P48051</id>
    </interactant>
    <interactant intactId="EBI-13082040">
        <id>Q9BZW4</id>
        <label>TM6SF2</label>
    </interactant>
    <organismsDiffer>false</organismsDiffer>
    <experiments>3</experiments>
</comment>
<comment type="interaction">
    <interactant intactId="EBI-12017638">
        <id>P48051</id>
    </interactant>
    <interactant intactId="EBI-12845616">
        <id>Q6UX40</id>
        <label>TMEM107</label>
    </interactant>
    <organismsDiffer>false</organismsDiffer>
    <experiments>3</experiments>
</comment>
<comment type="interaction">
    <interactant intactId="EBI-12017638">
        <id>P48051</id>
    </interactant>
    <interactant intactId="EBI-10171534">
        <id>A0PK00</id>
        <label>TMEM120B</label>
    </interactant>
    <organismsDiffer>false</organismsDiffer>
    <experiments>3</experiments>
</comment>
<comment type="interaction">
    <interactant intactId="EBI-12017638">
        <id>P48051</id>
    </interactant>
    <interactant intactId="EBI-12274070">
        <id>Q969S6</id>
        <label>TMEM203</label>
    </interactant>
    <organismsDiffer>false</organismsDiffer>
    <experiments>3</experiments>
</comment>
<comment type="interaction">
    <interactant intactId="EBI-12017638">
        <id>P48051</id>
    </interactant>
    <interactant intactId="EBI-12876824">
        <id>Q9BTX3</id>
        <label>TMEM208</label>
    </interactant>
    <organismsDiffer>false</organismsDiffer>
    <experiments>3</experiments>
</comment>
<comment type="interaction">
    <interactant intactId="EBI-12017638">
        <id>P48051</id>
    </interactant>
    <interactant intactId="EBI-10173151">
        <id>A2RU14</id>
        <label>TMEM218</label>
    </interactant>
    <organismsDiffer>false</organismsDiffer>
    <experiments>3</experiments>
</comment>
<comment type="interaction">
    <interactant intactId="EBI-12017638">
        <id>P48051</id>
    </interactant>
    <interactant intactId="EBI-11724433">
        <id>Q6ZT21</id>
        <label>TMPPE</label>
    </interactant>
    <organismsDiffer>false</organismsDiffer>
    <experiments>3</experiments>
</comment>
<comment type="interaction">
    <interactant intactId="EBI-12017638">
        <id>P48051</id>
    </interactant>
    <interactant intactId="EBI-717441">
        <id>O14798</id>
        <label>TNFRSF10C</label>
    </interactant>
    <organismsDiffer>false</organismsDiffer>
    <experiments>3</experiments>
</comment>
<comment type="interaction">
    <interactant intactId="EBI-12017638">
        <id>P48051</id>
    </interactant>
    <interactant intactId="EBI-12195249">
        <id>Q5TGU0</id>
        <label>TSPO2</label>
    </interactant>
    <organismsDiffer>false</organismsDiffer>
    <experiments>3</experiments>
</comment>
<comment type="interaction">
    <interactant intactId="EBI-12017638">
        <id>P48051</id>
    </interactant>
    <interactant intactId="EBI-2819725">
        <id>Q9Y5Z9</id>
        <label>UBIAD1</label>
    </interactant>
    <organismsDiffer>false</organismsDiffer>
    <experiments>3</experiments>
</comment>
<comment type="interaction">
    <interactant intactId="EBI-12017638">
        <id>P48051</id>
    </interactant>
    <interactant intactId="EBI-7601760">
        <id>Q53HI1</id>
        <label>UNC50</label>
    </interactant>
    <organismsDiffer>false</organismsDiffer>
    <experiments>3</experiments>
</comment>
<comment type="interaction">
    <interactant intactId="EBI-12017638">
        <id>P48051</id>
    </interactant>
    <interactant intactId="EBI-12237619">
        <id>O75841</id>
        <label>UPK1B</label>
    </interactant>
    <organismsDiffer>false</organismsDiffer>
    <experiments>3</experiments>
</comment>
<comment type="interaction">
    <interactant intactId="EBI-12017638">
        <id>P48051</id>
    </interactant>
    <interactant intactId="EBI-12190699">
        <id>Q6UX27-3</id>
        <label>VSTM1</label>
    </interactant>
    <organismsDiffer>false</organismsDiffer>
    <experiments>3</experiments>
</comment>
<comment type="interaction">
    <interactant intactId="EBI-12017638">
        <id>P48051</id>
    </interactant>
    <interactant intactId="EBI-7850136">
        <id>Q9Y548</id>
        <label>YIPF1</label>
    </interactant>
    <organismsDiffer>false</organismsDiffer>
    <experiments>3</experiments>
</comment>
<comment type="interaction">
    <interactant intactId="EBI-12017638">
        <id>P48051</id>
    </interactant>
    <interactant intactId="EBI-751210">
        <id>Q96EC8</id>
        <label>YIPF6</label>
    </interactant>
    <organismsDiffer>false</organismsDiffer>
    <experiments>3</experiments>
</comment>
<comment type="interaction">
    <interactant intactId="EBI-12017638">
        <id>P48051</id>
    </interactant>
    <interactant intactId="EBI-10254561">
        <id>Q6UX98</id>
        <label>ZDHHC24</label>
    </interactant>
    <organismsDiffer>false</organismsDiffer>
    <experiments>3</experiments>
</comment>
<comment type="subcellular location">
    <subcellularLocation>
        <location evidence="4">Membrane</location>
        <topology evidence="4">Multi-pass membrane protein</topology>
    </subcellularLocation>
</comment>
<comment type="tissue specificity">
    <text evidence="8">Most abundant in cerebellum, and to a lesser degree in islets and exocrine pancreas.</text>
</comment>
<comment type="disease" evidence="7">
    <disease id="DI-04375">
        <name>Keppen-Lubinsky syndrome</name>
        <acronym>KPLBS</acronym>
        <description>A rare disease characterized by severe developmental delay, intellectual disability, severe generalized lipodystrophy, dysmorphic features including microcephaly, large prominent eyes, narrow nasal bridge, tented upper lip, high palate, open mouth, tightly adherent skin, and aged appearance.</description>
        <dbReference type="MIM" id="614098"/>
    </disease>
    <text>The disease is caused by variants affecting the gene represented in this entry.</text>
</comment>
<comment type="similarity">
    <text evidence="10">Belongs to the inward rectifier-type potassium channel (TC 1.A.2.1) family. KCNJ6 subfamily.</text>
</comment>